<keyword id="KW-0028">Amino-acid biosynthesis</keyword>
<keyword id="KW-0963">Cytoplasm</keyword>
<keyword id="KW-0368">Histidine biosynthesis</keyword>
<keyword id="KW-0456">Lyase</keyword>
<evidence type="ECO:0000255" key="1">
    <source>
        <dbReference type="HAMAP-Rule" id="MF_01013"/>
    </source>
</evidence>
<sequence length="261" mass="28553">MLAKRIIPCLDVHGGRVVKGTNFVNLRDAGDPVELAAVYDKEGADELVFLDITASSDGRAIMLDVVRRTAEEVFIPFTVGGGLRTVEDIREMLKAGADKISLNTSAVQTPQLIGDSAWKFGSQCIVVAIDARRRRDEEGRLLEGWEVYTHGGRKPTGIDVLEWARKVEELGCGEILLTSMDKDGTKDGYDIPLTRAVSEAVKIPVIASGGVGNLEHICEGLTAGKADAALAASIFHYKEYTIRETKEYLRGKGVHVRKWRD</sequence>
<gene>
    <name evidence="1" type="primary">hisF</name>
</gene>
<accession>Q8GDQ6</accession>
<dbReference type="EC" id="4.3.2.10" evidence="1"/>
<dbReference type="EMBL" id="AY142920">
    <property type="protein sequence ID" value="AAN87524.1"/>
    <property type="molecule type" value="Genomic_DNA"/>
</dbReference>
<dbReference type="RefSeq" id="WP_155476132.1">
    <property type="nucleotide sequence ID" value="NZ_WNKU01000008.1"/>
</dbReference>
<dbReference type="SMR" id="Q8GDQ6"/>
<dbReference type="OrthoDB" id="9781903at2"/>
<dbReference type="UniPathway" id="UPA00031">
    <property type="reaction ID" value="UER00010"/>
</dbReference>
<dbReference type="GO" id="GO:0005737">
    <property type="term" value="C:cytoplasm"/>
    <property type="evidence" value="ECO:0007669"/>
    <property type="project" value="UniProtKB-SubCell"/>
</dbReference>
<dbReference type="GO" id="GO:0000107">
    <property type="term" value="F:imidazoleglycerol-phosphate synthase activity"/>
    <property type="evidence" value="ECO:0007669"/>
    <property type="project" value="InterPro"/>
</dbReference>
<dbReference type="GO" id="GO:0016829">
    <property type="term" value="F:lyase activity"/>
    <property type="evidence" value="ECO:0007669"/>
    <property type="project" value="UniProtKB-KW"/>
</dbReference>
<dbReference type="GO" id="GO:0000105">
    <property type="term" value="P:L-histidine biosynthetic process"/>
    <property type="evidence" value="ECO:0007669"/>
    <property type="project" value="UniProtKB-UniPathway"/>
</dbReference>
<dbReference type="CDD" id="cd04731">
    <property type="entry name" value="HisF"/>
    <property type="match status" value="1"/>
</dbReference>
<dbReference type="FunFam" id="3.20.20.70:FF:000006">
    <property type="entry name" value="Imidazole glycerol phosphate synthase subunit HisF"/>
    <property type="match status" value="1"/>
</dbReference>
<dbReference type="Gene3D" id="3.20.20.70">
    <property type="entry name" value="Aldolase class I"/>
    <property type="match status" value="1"/>
</dbReference>
<dbReference type="HAMAP" id="MF_01013">
    <property type="entry name" value="HisF"/>
    <property type="match status" value="1"/>
</dbReference>
<dbReference type="InterPro" id="IPR013785">
    <property type="entry name" value="Aldolase_TIM"/>
</dbReference>
<dbReference type="InterPro" id="IPR006062">
    <property type="entry name" value="His_biosynth"/>
</dbReference>
<dbReference type="InterPro" id="IPR004651">
    <property type="entry name" value="HisF"/>
</dbReference>
<dbReference type="InterPro" id="IPR050064">
    <property type="entry name" value="IGPS_HisA/HisF"/>
</dbReference>
<dbReference type="InterPro" id="IPR011060">
    <property type="entry name" value="RibuloseP-bd_barrel"/>
</dbReference>
<dbReference type="NCBIfam" id="TIGR00735">
    <property type="entry name" value="hisF"/>
    <property type="match status" value="1"/>
</dbReference>
<dbReference type="PANTHER" id="PTHR21235:SF2">
    <property type="entry name" value="IMIDAZOLE GLYCEROL PHOSPHATE SYNTHASE HISHF"/>
    <property type="match status" value="1"/>
</dbReference>
<dbReference type="PANTHER" id="PTHR21235">
    <property type="entry name" value="IMIDAZOLE GLYCEROL PHOSPHATE SYNTHASE SUBUNIT HISF/H IGP SYNTHASE SUBUNIT HISF/H"/>
    <property type="match status" value="1"/>
</dbReference>
<dbReference type="Pfam" id="PF00977">
    <property type="entry name" value="His_biosynth"/>
    <property type="match status" value="1"/>
</dbReference>
<dbReference type="SUPFAM" id="SSF51366">
    <property type="entry name" value="Ribulose-phoshate binding barrel"/>
    <property type="match status" value="1"/>
</dbReference>
<proteinExistence type="inferred from homology"/>
<comment type="function">
    <text evidence="1">IGPS catalyzes the conversion of PRFAR and glutamine to IGP, AICAR and glutamate. The HisF subunit catalyzes the cyclization activity that produces IGP and AICAR from PRFAR using the ammonia provided by the HisH subunit.</text>
</comment>
<comment type="catalytic activity">
    <reaction evidence="1">
        <text>5-[(5-phospho-1-deoxy-D-ribulos-1-ylimino)methylamino]-1-(5-phospho-beta-D-ribosyl)imidazole-4-carboxamide + L-glutamine = D-erythro-1-(imidazol-4-yl)glycerol 3-phosphate + 5-amino-1-(5-phospho-beta-D-ribosyl)imidazole-4-carboxamide + L-glutamate + H(+)</text>
        <dbReference type="Rhea" id="RHEA:24793"/>
        <dbReference type="ChEBI" id="CHEBI:15378"/>
        <dbReference type="ChEBI" id="CHEBI:29985"/>
        <dbReference type="ChEBI" id="CHEBI:58278"/>
        <dbReference type="ChEBI" id="CHEBI:58359"/>
        <dbReference type="ChEBI" id="CHEBI:58475"/>
        <dbReference type="ChEBI" id="CHEBI:58525"/>
        <dbReference type="EC" id="4.3.2.10"/>
    </reaction>
</comment>
<comment type="pathway">
    <text evidence="1">Amino-acid biosynthesis; L-histidine biosynthesis; L-histidine from 5-phospho-alpha-D-ribose 1-diphosphate: step 5/9.</text>
</comment>
<comment type="subunit">
    <text evidence="1">Heterodimer of HisH and HisF.</text>
</comment>
<comment type="subcellular location">
    <subcellularLocation>
        <location evidence="1">Cytoplasm</location>
    </subcellularLocation>
</comment>
<comment type="similarity">
    <text evidence="1">Belongs to the HisA/HisF family.</text>
</comment>
<protein>
    <recommendedName>
        <fullName evidence="1">Imidazole glycerol phosphate synthase subunit HisF</fullName>
        <ecNumber evidence="1">4.3.2.10</ecNumber>
    </recommendedName>
    <alternativeName>
        <fullName evidence="1">IGP synthase cyclase subunit</fullName>
    </alternativeName>
    <alternativeName>
        <fullName evidence="1">IGP synthase subunit HisF</fullName>
    </alternativeName>
    <alternativeName>
        <fullName evidence="1">ImGP synthase subunit HisF</fullName>
        <shortName evidence="1">IGPS subunit HisF</shortName>
    </alternativeName>
</protein>
<reference key="1">
    <citation type="journal article" date="2002" name="Science">
        <title>Whole-genome analysis of photosynthetic prokaryotes.</title>
        <authorList>
            <person name="Raymond J."/>
            <person name="Zhaxybayeva O."/>
            <person name="Gogarten J.P."/>
            <person name="Gerdes S.Y."/>
            <person name="Blankenship R.E."/>
        </authorList>
    </citation>
    <scope>NUCLEOTIDE SEQUENCE [GENOMIC DNA]</scope>
</reference>
<organism>
    <name type="scientific">Heliobacterium mobile</name>
    <name type="common">Heliobacillus mobilis</name>
    <dbReference type="NCBI Taxonomy" id="28064"/>
    <lineage>
        <taxon>Bacteria</taxon>
        <taxon>Bacillati</taxon>
        <taxon>Bacillota</taxon>
        <taxon>Clostridia</taxon>
        <taxon>Eubacteriales</taxon>
        <taxon>Heliobacteriaceae</taxon>
        <taxon>Heliobacterium</taxon>
    </lineage>
</organism>
<feature type="chain" id="PRO_0000142166" description="Imidazole glycerol phosphate synthase subunit HisF">
    <location>
        <begin position="1"/>
        <end position="261" status="greater than"/>
    </location>
</feature>
<feature type="active site" evidence="1">
    <location>
        <position position="11"/>
    </location>
</feature>
<feature type="active site" evidence="1">
    <location>
        <position position="130"/>
    </location>
</feature>
<feature type="non-terminal residue">
    <location>
        <position position="261"/>
    </location>
</feature>
<name>HIS6_HELMO</name>